<feature type="chain" id="PRO_0000374459" description="tRNA-2-methylthio-N(6)-dimethylallyladenosine synthase">
    <location>
        <begin position="1"/>
        <end position="450"/>
    </location>
</feature>
<feature type="domain" description="MTTase N-terminal" evidence="1">
    <location>
        <begin position="17"/>
        <end position="131"/>
    </location>
</feature>
<feature type="domain" description="Radical SAM core" evidence="2">
    <location>
        <begin position="154"/>
        <end position="385"/>
    </location>
</feature>
<feature type="domain" description="TRAM" evidence="1">
    <location>
        <begin position="388"/>
        <end position="450"/>
    </location>
</feature>
<feature type="binding site" evidence="1">
    <location>
        <position position="26"/>
    </location>
    <ligand>
        <name>[4Fe-4S] cluster</name>
        <dbReference type="ChEBI" id="CHEBI:49883"/>
        <label>1</label>
    </ligand>
</feature>
<feature type="binding site" evidence="1">
    <location>
        <position position="62"/>
    </location>
    <ligand>
        <name>[4Fe-4S] cluster</name>
        <dbReference type="ChEBI" id="CHEBI:49883"/>
        <label>1</label>
    </ligand>
</feature>
<feature type="binding site" evidence="1">
    <location>
        <position position="94"/>
    </location>
    <ligand>
        <name>[4Fe-4S] cluster</name>
        <dbReference type="ChEBI" id="CHEBI:49883"/>
        <label>1</label>
    </ligand>
</feature>
<feature type="binding site" evidence="1">
    <location>
        <position position="168"/>
    </location>
    <ligand>
        <name>[4Fe-4S] cluster</name>
        <dbReference type="ChEBI" id="CHEBI:49883"/>
        <label>2</label>
        <note>4Fe-4S-S-AdoMet</note>
    </ligand>
</feature>
<feature type="binding site" evidence="1">
    <location>
        <position position="172"/>
    </location>
    <ligand>
        <name>[4Fe-4S] cluster</name>
        <dbReference type="ChEBI" id="CHEBI:49883"/>
        <label>2</label>
        <note>4Fe-4S-S-AdoMet</note>
    </ligand>
</feature>
<feature type="binding site" evidence="1">
    <location>
        <position position="175"/>
    </location>
    <ligand>
        <name>[4Fe-4S] cluster</name>
        <dbReference type="ChEBI" id="CHEBI:49883"/>
        <label>2</label>
        <note>4Fe-4S-S-AdoMet</note>
    </ligand>
</feature>
<name>MIAB_PARUW</name>
<evidence type="ECO:0000255" key="1">
    <source>
        <dbReference type="HAMAP-Rule" id="MF_01864"/>
    </source>
</evidence>
<evidence type="ECO:0000255" key="2">
    <source>
        <dbReference type="PROSITE-ProRule" id="PRU01266"/>
    </source>
</evidence>
<comment type="function">
    <text evidence="1">Catalyzes the methylthiolation of N6-(dimethylallyl)adenosine (i(6)A), leading to the formation of 2-methylthio-N6-(dimethylallyl)adenosine (ms(2)i(6)A) at position 37 in tRNAs that read codons beginning with uridine.</text>
</comment>
<comment type="catalytic activity">
    <reaction evidence="1">
        <text>N(6)-dimethylallyladenosine(37) in tRNA + (sulfur carrier)-SH + AH2 + 2 S-adenosyl-L-methionine = 2-methylsulfanyl-N(6)-dimethylallyladenosine(37) in tRNA + (sulfur carrier)-H + 5'-deoxyadenosine + L-methionine + A + S-adenosyl-L-homocysteine + 2 H(+)</text>
        <dbReference type="Rhea" id="RHEA:37067"/>
        <dbReference type="Rhea" id="RHEA-COMP:10375"/>
        <dbReference type="Rhea" id="RHEA-COMP:10376"/>
        <dbReference type="Rhea" id="RHEA-COMP:14737"/>
        <dbReference type="Rhea" id="RHEA-COMP:14739"/>
        <dbReference type="ChEBI" id="CHEBI:13193"/>
        <dbReference type="ChEBI" id="CHEBI:15378"/>
        <dbReference type="ChEBI" id="CHEBI:17319"/>
        <dbReference type="ChEBI" id="CHEBI:17499"/>
        <dbReference type="ChEBI" id="CHEBI:29917"/>
        <dbReference type="ChEBI" id="CHEBI:57844"/>
        <dbReference type="ChEBI" id="CHEBI:57856"/>
        <dbReference type="ChEBI" id="CHEBI:59789"/>
        <dbReference type="ChEBI" id="CHEBI:64428"/>
        <dbReference type="ChEBI" id="CHEBI:74415"/>
        <dbReference type="ChEBI" id="CHEBI:74417"/>
        <dbReference type="EC" id="2.8.4.3"/>
    </reaction>
</comment>
<comment type="cofactor">
    <cofactor evidence="1">
        <name>[4Fe-4S] cluster</name>
        <dbReference type="ChEBI" id="CHEBI:49883"/>
    </cofactor>
    <text evidence="1">Binds 2 [4Fe-4S] clusters. One cluster is coordinated with 3 cysteines and an exchangeable S-adenosyl-L-methionine.</text>
</comment>
<comment type="subunit">
    <text evidence="1">Monomer.</text>
</comment>
<comment type="subcellular location">
    <subcellularLocation>
        <location evidence="1">Cytoplasm</location>
    </subcellularLocation>
</comment>
<comment type="similarity">
    <text evidence="1">Belongs to the methylthiotransferase family. MiaB subfamily.</text>
</comment>
<reference key="1">
    <citation type="journal article" date="2004" name="Science">
        <title>Illuminating the evolutionary history of chlamydiae.</title>
        <authorList>
            <person name="Horn M."/>
            <person name="Collingro A."/>
            <person name="Schmitz-Esser S."/>
            <person name="Beier C.L."/>
            <person name="Purkhold U."/>
            <person name="Fartmann B."/>
            <person name="Brandt P."/>
            <person name="Nyakatura G.J."/>
            <person name="Droege M."/>
            <person name="Frishman D."/>
            <person name="Rattei T."/>
            <person name="Mewes H.-W."/>
            <person name="Wagner M."/>
        </authorList>
    </citation>
    <scope>NUCLEOTIDE SEQUENCE [LARGE SCALE GENOMIC DNA]</scope>
    <source>
        <strain>UWE25</strain>
    </source>
</reference>
<keyword id="KW-0004">4Fe-4S</keyword>
<keyword id="KW-0963">Cytoplasm</keyword>
<keyword id="KW-0408">Iron</keyword>
<keyword id="KW-0411">Iron-sulfur</keyword>
<keyword id="KW-0479">Metal-binding</keyword>
<keyword id="KW-1185">Reference proteome</keyword>
<keyword id="KW-0949">S-adenosyl-L-methionine</keyword>
<keyword id="KW-0808">Transferase</keyword>
<keyword id="KW-0819">tRNA processing</keyword>
<dbReference type="EC" id="2.8.4.3" evidence="1"/>
<dbReference type="EMBL" id="BX908798">
    <property type="protein sequence ID" value="CAF24482.1"/>
    <property type="molecule type" value="Genomic_DNA"/>
</dbReference>
<dbReference type="SMR" id="Q6MAB7"/>
<dbReference type="STRING" id="264201.pc1758"/>
<dbReference type="eggNOG" id="COG0621">
    <property type="taxonomic scope" value="Bacteria"/>
</dbReference>
<dbReference type="HOGENOM" id="CLU_018697_2_0_0"/>
<dbReference type="Proteomes" id="UP000000529">
    <property type="component" value="Chromosome"/>
</dbReference>
<dbReference type="GO" id="GO:0005829">
    <property type="term" value="C:cytosol"/>
    <property type="evidence" value="ECO:0007669"/>
    <property type="project" value="TreeGrafter"/>
</dbReference>
<dbReference type="GO" id="GO:0051539">
    <property type="term" value="F:4 iron, 4 sulfur cluster binding"/>
    <property type="evidence" value="ECO:0007669"/>
    <property type="project" value="UniProtKB-UniRule"/>
</dbReference>
<dbReference type="GO" id="GO:0046872">
    <property type="term" value="F:metal ion binding"/>
    <property type="evidence" value="ECO:0007669"/>
    <property type="project" value="UniProtKB-KW"/>
</dbReference>
<dbReference type="GO" id="GO:0035597">
    <property type="term" value="F:N6-isopentenyladenosine methylthiotransferase activity"/>
    <property type="evidence" value="ECO:0007669"/>
    <property type="project" value="TreeGrafter"/>
</dbReference>
<dbReference type="CDD" id="cd01335">
    <property type="entry name" value="Radical_SAM"/>
    <property type="match status" value="1"/>
</dbReference>
<dbReference type="FunFam" id="3.40.50.12160:FF:000003">
    <property type="entry name" value="CDK5 regulatory subunit-associated protein 1"/>
    <property type="match status" value="1"/>
</dbReference>
<dbReference type="FunFam" id="3.80.30.20:FF:000001">
    <property type="entry name" value="tRNA-2-methylthio-N(6)-dimethylallyladenosine synthase 2"/>
    <property type="match status" value="1"/>
</dbReference>
<dbReference type="Gene3D" id="3.40.50.12160">
    <property type="entry name" value="Methylthiotransferase, N-terminal domain"/>
    <property type="match status" value="1"/>
</dbReference>
<dbReference type="Gene3D" id="3.80.30.20">
    <property type="entry name" value="tm_1862 like domain"/>
    <property type="match status" value="1"/>
</dbReference>
<dbReference type="HAMAP" id="MF_01864">
    <property type="entry name" value="tRNA_metthiotr_MiaB"/>
    <property type="match status" value="1"/>
</dbReference>
<dbReference type="InterPro" id="IPR006638">
    <property type="entry name" value="Elp3/MiaA/NifB-like_rSAM"/>
</dbReference>
<dbReference type="InterPro" id="IPR005839">
    <property type="entry name" value="Methylthiotransferase"/>
</dbReference>
<dbReference type="InterPro" id="IPR020612">
    <property type="entry name" value="Methylthiotransferase_CS"/>
</dbReference>
<dbReference type="InterPro" id="IPR013848">
    <property type="entry name" value="Methylthiotransferase_N"/>
</dbReference>
<dbReference type="InterPro" id="IPR038135">
    <property type="entry name" value="Methylthiotransferase_N_sf"/>
</dbReference>
<dbReference type="InterPro" id="IPR006463">
    <property type="entry name" value="MiaB_methiolase"/>
</dbReference>
<dbReference type="InterPro" id="IPR007197">
    <property type="entry name" value="rSAM"/>
</dbReference>
<dbReference type="InterPro" id="IPR023404">
    <property type="entry name" value="rSAM_horseshoe"/>
</dbReference>
<dbReference type="InterPro" id="IPR002792">
    <property type="entry name" value="TRAM_dom"/>
</dbReference>
<dbReference type="NCBIfam" id="TIGR01574">
    <property type="entry name" value="miaB-methiolase"/>
    <property type="match status" value="1"/>
</dbReference>
<dbReference type="NCBIfam" id="TIGR00089">
    <property type="entry name" value="MiaB/RimO family radical SAM methylthiotransferase"/>
    <property type="match status" value="1"/>
</dbReference>
<dbReference type="PANTHER" id="PTHR43020">
    <property type="entry name" value="CDK5 REGULATORY SUBUNIT-ASSOCIATED PROTEIN 1"/>
    <property type="match status" value="1"/>
</dbReference>
<dbReference type="PANTHER" id="PTHR43020:SF2">
    <property type="entry name" value="MITOCHONDRIAL TRNA METHYLTHIOTRANSFERASE CDK5RAP1"/>
    <property type="match status" value="1"/>
</dbReference>
<dbReference type="Pfam" id="PF04055">
    <property type="entry name" value="Radical_SAM"/>
    <property type="match status" value="1"/>
</dbReference>
<dbReference type="Pfam" id="PF00919">
    <property type="entry name" value="UPF0004"/>
    <property type="match status" value="1"/>
</dbReference>
<dbReference type="SFLD" id="SFLDF00273">
    <property type="entry name" value="(dimethylallyl)adenosine_tRNA"/>
    <property type="match status" value="1"/>
</dbReference>
<dbReference type="SFLD" id="SFLDG01082">
    <property type="entry name" value="B12-binding_domain_containing"/>
    <property type="match status" value="1"/>
</dbReference>
<dbReference type="SFLD" id="SFLDG01061">
    <property type="entry name" value="methylthiotransferase"/>
    <property type="match status" value="1"/>
</dbReference>
<dbReference type="SMART" id="SM00729">
    <property type="entry name" value="Elp3"/>
    <property type="match status" value="1"/>
</dbReference>
<dbReference type="SUPFAM" id="SSF102114">
    <property type="entry name" value="Radical SAM enzymes"/>
    <property type="match status" value="1"/>
</dbReference>
<dbReference type="PROSITE" id="PS51449">
    <property type="entry name" value="MTTASE_N"/>
    <property type="match status" value="1"/>
</dbReference>
<dbReference type="PROSITE" id="PS01278">
    <property type="entry name" value="MTTASE_RADICAL"/>
    <property type="match status" value="1"/>
</dbReference>
<dbReference type="PROSITE" id="PS51918">
    <property type="entry name" value="RADICAL_SAM"/>
    <property type="match status" value="1"/>
</dbReference>
<dbReference type="PROSITE" id="PS50926">
    <property type="entry name" value="TRAM"/>
    <property type="match status" value="1"/>
</dbReference>
<accession>Q6MAB7</accession>
<proteinExistence type="inferred from homology"/>
<organism>
    <name type="scientific">Protochlamydia amoebophila (strain UWE25)</name>
    <dbReference type="NCBI Taxonomy" id="264201"/>
    <lineage>
        <taxon>Bacteria</taxon>
        <taxon>Pseudomonadati</taxon>
        <taxon>Chlamydiota</taxon>
        <taxon>Chlamydiia</taxon>
        <taxon>Parachlamydiales</taxon>
        <taxon>Parachlamydiaceae</taxon>
        <taxon>Candidatus Protochlamydia</taxon>
    </lineage>
</organism>
<gene>
    <name evidence="1" type="primary">miaB</name>
    <name type="ordered locus">pc1758</name>
</gene>
<protein>
    <recommendedName>
        <fullName evidence="1">tRNA-2-methylthio-N(6)-dimethylallyladenosine synthase</fullName>
        <ecNumber evidence="1">2.8.4.3</ecNumber>
    </recommendedName>
    <alternativeName>
        <fullName evidence="1">(Dimethylallyl)adenosine tRNA methylthiotransferase MiaB</fullName>
    </alternativeName>
    <alternativeName>
        <fullName evidence="1">tRNA-i(6)A37 methylthiotransferase</fullName>
    </alternativeName>
</protein>
<sequence length="450" mass="52227">MFSFNLLTQYIIMRSLKKFFVKTYGCQMNELDSEIMIGQLENRGLTRSHDENDADLLIFNTCSIRDLAERKVMGKLGKLGLTKQSQAIIGVTGCMANAKKDSLFQKLPHIDFVLGTNNIHDLNHVLDEVLASGKQSIRTDDHFEFELDYLNAKREDQIKAYVSIIRGCDKFCTYCVVPYTRGSEVSRAPENILEECRHLVNQGYKEITLLGQNVNSYGKDKLEWKCLFHDLLYQLDKIPGLERVRFMTSHPVDISKELMEAIRDLKTLCEFVHFPLQAGSNRVLKKMHRIYTVEQYLEKVQMLKEIVPNVALGTDIIVGFPTETEEEFQETYRLLKEIEYSVAFLFSYSPRKGTPAMRWRDDVPEEVKQDRLQRLLQLQDTIYMKHRQAFLGQTVEVLVERRNFKDDRLVKGRTRCWKNVLFTGGDELVGTMQQVKIHGYSHQTLLGDLQ</sequence>